<organism>
    <name type="scientific">Influenza A virus (strain A/Korea/426/1968 H2N2)</name>
    <dbReference type="NCBI Taxonomy" id="488241"/>
    <lineage>
        <taxon>Viruses</taxon>
        <taxon>Riboviria</taxon>
        <taxon>Orthornavirae</taxon>
        <taxon>Negarnaviricota</taxon>
        <taxon>Polyploviricotina</taxon>
        <taxon>Insthoviricetes</taxon>
        <taxon>Articulavirales</taxon>
        <taxon>Orthomyxoviridae</taxon>
        <taxon>Alphainfluenzavirus</taxon>
        <taxon>Alphainfluenzavirus influenzae</taxon>
        <taxon>Influenza A virus</taxon>
    </lineage>
</organism>
<evidence type="ECO:0000255" key="1">
    <source>
        <dbReference type="HAMAP-Rule" id="MF_04066"/>
    </source>
</evidence>
<evidence type="ECO:0000256" key="2">
    <source>
        <dbReference type="SAM" id="MobiDB-lite"/>
    </source>
</evidence>
<feature type="chain" id="PRO_0000324246" description="Non-structural protein 1">
    <location>
        <begin position="1"/>
        <end position="237"/>
    </location>
</feature>
<feature type="region of interest" description="RNA-binding and homodimerization" evidence="1">
    <location>
        <begin position="1"/>
        <end position="73"/>
    </location>
</feature>
<feature type="region of interest" description="CPSF4-binding" evidence="1">
    <location>
        <begin position="180"/>
        <end position="215"/>
    </location>
</feature>
<feature type="region of interest" description="Disordered" evidence="2">
    <location>
        <begin position="205"/>
        <end position="237"/>
    </location>
</feature>
<feature type="region of interest" description="PABPN1-binding" evidence="1">
    <location>
        <begin position="223"/>
        <end position="230"/>
    </location>
</feature>
<feature type="short sequence motif" description="Nuclear localization signal" evidence="1">
    <location>
        <begin position="34"/>
        <end position="38"/>
    </location>
</feature>
<feature type="short sequence motif" description="Nuclear export signal" evidence="1">
    <location>
        <begin position="137"/>
        <end position="146"/>
    </location>
</feature>
<feature type="compositionally biased region" description="Basic residues" evidence="2">
    <location>
        <begin position="217"/>
        <end position="237"/>
    </location>
</feature>
<keyword id="KW-0025">Alternative splicing</keyword>
<keyword id="KW-1262">Eukaryotic host gene expression shutoff by virus</keyword>
<keyword id="KW-1035">Host cytoplasm</keyword>
<keyword id="KW-1190">Host gene expression shutoff by virus</keyword>
<keyword id="KW-1192">Host mRNA suppression by virus</keyword>
<keyword id="KW-1048">Host nucleus</keyword>
<keyword id="KW-0945">Host-virus interaction</keyword>
<keyword id="KW-1090">Inhibition of host innate immune response by virus</keyword>
<keyword id="KW-1114">Inhibition of host interferon signaling pathway by virus</keyword>
<keyword id="KW-1102">Inhibition of host PKR by virus</keyword>
<keyword id="KW-1103">Inhibition of host pre-mRNA processing by virus</keyword>
<keyword id="KW-1088">Inhibition of host RIG-I by virus</keyword>
<keyword id="KW-1113">Inhibition of host RLR pathway by virus</keyword>
<keyword id="KW-0922">Interferon antiviral system evasion</keyword>
<keyword id="KW-0694">RNA-binding</keyword>
<keyword id="KW-0832">Ubl conjugation</keyword>
<keyword id="KW-0899">Viral immunoevasion</keyword>
<organismHost>
    <name type="scientific">Aves</name>
    <dbReference type="NCBI Taxonomy" id="8782"/>
</organismHost>
<organismHost>
    <name type="scientific">Homo sapiens</name>
    <name type="common">Human</name>
    <dbReference type="NCBI Taxonomy" id="9606"/>
</organismHost>
<comment type="function">
    <text evidence="1">Inhibits post-transcriptional processing of cellular pre-mRNA, by binding and inhibiting two cellular proteins that are required for the 3'-end processing of cellular pre-mRNAs: the 30 kDa cleavage and polyadenylation specificity factor/CPSF4 and the poly(A)-binding protein 2/PABPN1. In turn, unprocessed 3' end pre-mRNAs accumulate in the host nucleus and are no longer exported to the cytoplasm. Cellular protein synthesis is thereby shut off very early after virus infection. Viral protein synthesis is not affected by the inhibition of the cellular 3' end processing machinery because the poly(A) tails of viral mRNAs are produced by the viral polymerase through a stuttering mechanism. Prevents the establishment of the cellular antiviral state by inhibiting TRIM25-mediated RIGI ubiquitination, which normally triggers the antiviral transduction signal that leads to the activation of type I IFN genes by transcription factors IRF3 and IRF7. Also binds poly(A) and U6 snRNA. Inhibits the integrated stress response (ISR) in the infected cell by blocking dsRNA binding by EIF2AK2/PKR and further phosphorylation of EIF2S1/EIF-2ALPHA. Stress granule formation is thus inhibited, which allows protein synthesis and viral replication.</text>
</comment>
<comment type="subunit">
    <text evidence="1">Homodimer. Interacts with host TRIM25 (via coiled coil); this interaction specifically inhibits TRIM25 multimerization and TRIM25-mediated RIGI CARD ubiquitination. Interacts with human EIF2AK2/PKR, CPSF4, IVNS1ABP and PABPN1.</text>
</comment>
<comment type="subcellular location">
    <subcellularLocation>
        <location evidence="1">Host nucleus</location>
    </subcellularLocation>
    <subcellularLocation>
        <location evidence="1">Host cytoplasm</location>
    </subcellularLocation>
    <text evidence="1">In uninfected, transfected cells, NS1 is localized in the nucleus. Only in virus infected cells, the nuclear export signal is unveiled, presumably by a viral protein, and a fraction of NS1 is exported in the cytoplasm.</text>
</comment>
<comment type="alternative products">
    <event type="alternative splicing"/>
    <isoform>
        <id>Q6XTC2-1</id>
        <name>NS1</name>
        <sequence type="displayed"/>
    </isoform>
    <isoform>
        <id>Q6XTC3-1</id>
        <name>NEP</name>
        <name>NS2</name>
        <sequence type="external"/>
    </isoform>
</comment>
<comment type="domain">
    <text evidence="1">The dsRNA-binding region is required for suppression of RNA silencing.</text>
</comment>
<comment type="PTM">
    <text evidence="1">Upon interferon induction, ISGylated via host HERC5; this results in the impairment of NS1 interaction with RNA targets due to its inability to form homodimers and to interact with host EIF2AK2/PKR.</text>
</comment>
<comment type="similarity">
    <text evidence="1">Belongs to the influenza A viruses NS1 family.</text>
</comment>
<accession>Q6XTC2</accession>
<reference key="1">
    <citation type="journal article" date="2004" name="Virology">
        <title>Genetic analysis of human H2N2 and early H3N2 influenza viruses, 1957-1972: evidence for genetic divergence and multiple reassortment events.</title>
        <authorList>
            <person name="Lindstrom S.E."/>
            <person name="Cox N.J."/>
            <person name="Klimov A."/>
        </authorList>
    </citation>
    <scope>NUCLEOTIDE SEQUENCE [GENOMIC RNA]</scope>
</reference>
<dbReference type="EMBL" id="AY210191">
    <property type="protein sequence ID" value="AAO46647.1"/>
    <property type="molecule type" value="Genomic_RNA"/>
</dbReference>
<dbReference type="RefSeq" id="YP_308870.1">
    <molecule id="Q6XTC2-1"/>
    <property type="nucleotide sequence ID" value="NC_007380.1"/>
</dbReference>
<dbReference type="SMR" id="Q6XTC2"/>
<dbReference type="KEGG" id="vg:23301357"/>
<dbReference type="OrthoDB" id="8721at10239"/>
<dbReference type="Proteomes" id="UP000200640">
    <property type="component" value="Genome"/>
</dbReference>
<dbReference type="GO" id="GO:0030430">
    <property type="term" value="C:host cell cytoplasm"/>
    <property type="evidence" value="ECO:0007669"/>
    <property type="project" value="UniProtKB-SubCell"/>
</dbReference>
<dbReference type="GO" id="GO:0042025">
    <property type="term" value="C:host cell nucleus"/>
    <property type="evidence" value="ECO:0007669"/>
    <property type="project" value="UniProtKB-SubCell"/>
</dbReference>
<dbReference type="GO" id="GO:0030291">
    <property type="term" value="F:protein serine/threonine kinase inhibitor activity"/>
    <property type="evidence" value="ECO:0007669"/>
    <property type="project" value="UniProtKB-KW"/>
</dbReference>
<dbReference type="GO" id="GO:0003723">
    <property type="term" value="F:RNA binding"/>
    <property type="evidence" value="ECO:0007669"/>
    <property type="project" value="UniProtKB-KW"/>
</dbReference>
<dbReference type="GO" id="GO:0039540">
    <property type="term" value="P:symbiont-mediated suppression of host cytoplasmic pattern recognition receptor signaling pathway via inhibition of RIG-I activity"/>
    <property type="evidence" value="ECO:0007669"/>
    <property type="project" value="UniProtKB-KW"/>
</dbReference>
<dbReference type="GO" id="GO:0039657">
    <property type="term" value="P:symbiont-mediated suppression of host gene expression"/>
    <property type="evidence" value="ECO:0007669"/>
    <property type="project" value="UniProtKB-KW"/>
</dbReference>
<dbReference type="GO" id="GO:0039524">
    <property type="term" value="P:symbiont-mediated suppression of host mRNA processing"/>
    <property type="evidence" value="ECO:0007669"/>
    <property type="project" value="UniProtKB-KW"/>
</dbReference>
<dbReference type="GO" id="GO:0039580">
    <property type="term" value="P:symbiont-mediated suppression of host PKR/eIFalpha signaling"/>
    <property type="evidence" value="ECO:0007669"/>
    <property type="project" value="UniProtKB-KW"/>
</dbReference>
<dbReference type="GO" id="GO:0039502">
    <property type="term" value="P:symbiont-mediated suppression of host type I interferon-mediated signaling pathway"/>
    <property type="evidence" value="ECO:0007669"/>
    <property type="project" value="UniProtKB-KW"/>
</dbReference>
<dbReference type="FunFam" id="1.10.287.10:FF:000001">
    <property type="entry name" value="Non-structural protein 1"/>
    <property type="match status" value="1"/>
</dbReference>
<dbReference type="FunFam" id="3.30.420.330:FF:000001">
    <property type="entry name" value="Non-structural protein 1"/>
    <property type="match status" value="1"/>
</dbReference>
<dbReference type="Gene3D" id="3.30.420.330">
    <property type="entry name" value="Influenza virus non-structural protein, effector domain"/>
    <property type="match status" value="1"/>
</dbReference>
<dbReference type="Gene3D" id="1.10.287.10">
    <property type="entry name" value="S15/NS1, RNA-binding"/>
    <property type="match status" value="1"/>
</dbReference>
<dbReference type="HAMAP" id="MF_04066">
    <property type="entry name" value="INFV_NS1"/>
    <property type="match status" value="1"/>
</dbReference>
<dbReference type="InterPro" id="IPR004208">
    <property type="entry name" value="NS1"/>
</dbReference>
<dbReference type="InterPro" id="IPR000256">
    <property type="entry name" value="NS1A"/>
</dbReference>
<dbReference type="InterPro" id="IPR038064">
    <property type="entry name" value="NS1A_effect_dom-like_sf"/>
</dbReference>
<dbReference type="InterPro" id="IPR009068">
    <property type="entry name" value="uS15_NS1_RNA-bd_sf"/>
</dbReference>
<dbReference type="Pfam" id="PF00600">
    <property type="entry name" value="Flu_NS1"/>
    <property type="match status" value="1"/>
</dbReference>
<dbReference type="SUPFAM" id="SSF143021">
    <property type="entry name" value="Ns1 effector domain-like"/>
    <property type="match status" value="1"/>
</dbReference>
<dbReference type="SUPFAM" id="SSF47060">
    <property type="entry name" value="S15/NS1 RNA-binding domain"/>
    <property type="match status" value="1"/>
</dbReference>
<sequence>MDSNTVSSFQVDCFLWHVRKQVVDQELGDAPFLDRLRRDQKSLRGRGSTLDLDIEAATRVGKQIVERILKEESDEALKMTMASAPASRYLTDMTIEELSRDWFMLMPKQKVEGPLCIRIDQAIMDKNIMLKANFSVIFDRLETLILLRAFTEEGAIVGEISPLPSLPGHTIEDVKNAIGVLIGGLEWNDNTVRVSKTLQRFAWRSSNENGRPPLTPKQKRKMARTIRSKVRRDKMAD</sequence>
<gene>
    <name evidence="1" type="primary">NS</name>
</gene>
<protein>
    <recommendedName>
        <fullName evidence="1">Non-structural protein 1</fullName>
        <shortName evidence="1">NS1</shortName>
    </recommendedName>
    <alternativeName>
        <fullName evidence="1">NS1A</fullName>
    </alternativeName>
</protein>
<proteinExistence type="inferred from homology"/>
<name>NS1_I68A5</name>